<sequence length="154" mass="17755">MTQRLPSSMSFGEEEEPDVLQKMMQKCKEQPFVPIGSLLTAGAVILAARSMKRGEKLKTQKYFRYRIGFQLATLIALVAGGVTLGQSSLEQKKTKEDQLREKAKLREKLWVEELERRDAIIQARKQRLEESKKELRDLAKQGFEDEREVDQGKK</sequence>
<name>RCF1_LODEL</name>
<protein>
    <recommendedName>
        <fullName>Respiratory supercomplex factor 1, mitochondrial</fullName>
    </recommendedName>
</protein>
<comment type="function">
    <text evidence="1">Cytochrome c oxidase subunit which plays a role in assembly of respiratory supercomplexes.</text>
</comment>
<comment type="subunit">
    <text evidence="1">Associates with the respiratory chain complex III/complex IV supercomplex.</text>
</comment>
<comment type="subcellular location">
    <subcellularLocation>
        <location evidence="3">Mitochondrion membrane</location>
        <topology evidence="3">Multi-pass membrane protein</topology>
    </subcellularLocation>
</comment>
<comment type="similarity">
    <text evidence="4">Belongs to the RCF1 family.</text>
</comment>
<feature type="chain" id="PRO_0000399637" description="Respiratory supercomplex factor 1, mitochondrial">
    <location>
        <begin position="1"/>
        <end position="154"/>
    </location>
</feature>
<feature type="transmembrane region" description="Helical" evidence="3">
    <location>
        <begin position="31"/>
        <end position="48"/>
    </location>
</feature>
<feature type="transmembrane region" description="Helical" evidence="3">
    <location>
        <begin position="63"/>
        <end position="85"/>
    </location>
</feature>
<feature type="domain" description="HIG1" evidence="3">
    <location>
        <begin position="4"/>
        <end position="95"/>
    </location>
</feature>
<feature type="coiled-coil region" evidence="2">
    <location>
        <begin position="89"/>
        <end position="144"/>
    </location>
</feature>
<accession>A5E2M7</accession>
<keyword id="KW-0175">Coiled coil</keyword>
<keyword id="KW-0472">Membrane</keyword>
<keyword id="KW-0496">Mitochondrion</keyword>
<keyword id="KW-1185">Reference proteome</keyword>
<keyword id="KW-0812">Transmembrane</keyword>
<keyword id="KW-1133">Transmembrane helix</keyword>
<organism>
    <name type="scientific">Lodderomyces elongisporus (strain ATCC 11503 / CBS 2605 / JCM 1781 / NBRC 1676 / NRRL YB-4239)</name>
    <name type="common">Yeast</name>
    <name type="synonym">Saccharomyces elongisporus</name>
    <dbReference type="NCBI Taxonomy" id="379508"/>
    <lineage>
        <taxon>Eukaryota</taxon>
        <taxon>Fungi</taxon>
        <taxon>Dikarya</taxon>
        <taxon>Ascomycota</taxon>
        <taxon>Saccharomycotina</taxon>
        <taxon>Pichiomycetes</taxon>
        <taxon>Debaryomycetaceae</taxon>
        <taxon>Candida/Lodderomyces clade</taxon>
        <taxon>Lodderomyces</taxon>
    </lineage>
</organism>
<proteinExistence type="inferred from homology"/>
<evidence type="ECO:0000250" key="1"/>
<evidence type="ECO:0000255" key="2"/>
<evidence type="ECO:0000255" key="3">
    <source>
        <dbReference type="PROSITE-ProRule" id="PRU00836"/>
    </source>
</evidence>
<evidence type="ECO:0000305" key="4"/>
<reference key="1">
    <citation type="journal article" date="2009" name="Nature">
        <title>Evolution of pathogenicity and sexual reproduction in eight Candida genomes.</title>
        <authorList>
            <person name="Butler G."/>
            <person name="Rasmussen M.D."/>
            <person name="Lin M.F."/>
            <person name="Santos M.A.S."/>
            <person name="Sakthikumar S."/>
            <person name="Munro C.A."/>
            <person name="Rheinbay E."/>
            <person name="Grabherr M."/>
            <person name="Forche A."/>
            <person name="Reedy J.L."/>
            <person name="Agrafioti I."/>
            <person name="Arnaud M.B."/>
            <person name="Bates S."/>
            <person name="Brown A.J.P."/>
            <person name="Brunke S."/>
            <person name="Costanzo M.C."/>
            <person name="Fitzpatrick D.A."/>
            <person name="de Groot P.W.J."/>
            <person name="Harris D."/>
            <person name="Hoyer L.L."/>
            <person name="Hube B."/>
            <person name="Klis F.M."/>
            <person name="Kodira C."/>
            <person name="Lennard N."/>
            <person name="Logue M.E."/>
            <person name="Martin R."/>
            <person name="Neiman A.M."/>
            <person name="Nikolaou E."/>
            <person name="Quail M.A."/>
            <person name="Quinn J."/>
            <person name="Santos M.C."/>
            <person name="Schmitzberger F.F."/>
            <person name="Sherlock G."/>
            <person name="Shah P."/>
            <person name="Silverstein K.A.T."/>
            <person name="Skrzypek M.S."/>
            <person name="Soll D."/>
            <person name="Staggs R."/>
            <person name="Stansfield I."/>
            <person name="Stumpf M.P.H."/>
            <person name="Sudbery P.E."/>
            <person name="Srikantha T."/>
            <person name="Zeng Q."/>
            <person name="Berman J."/>
            <person name="Berriman M."/>
            <person name="Heitman J."/>
            <person name="Gow N.A.R."/>
            <person name="Lorenz M.C."/>
            <person name="Birren B.W."/>
            <person name="Kellis M."/>
            <person name="Cuomo C.A."/>
        </authorList>
    </citation>
    <scope>NUCLEOTIDE SEQUENCE [LARGE SCALE GENOMIC DNA]</scope>
    <source>
        <strain>ATCC 11503 / BCRC 21390 / CBS 2605 / JCM 1781 / NBRC 1676 / NRRL YB-4239</strain>
    </source>
</reference>
<dbReference type="EMBL" id="CH981528">
    <property type="protein sequence ID" value="EDK45685.1"/>
    <property type="molecule type" value="Genomic_DNA"/>
</dbReference>
<dbReference type="RefSeq" id="XP_001524832.1">
    <property type="nucleotide sequence ID" value="XM_001524782.1"/>
</dbReference>
<dbReference type="SMR" id="A5E2M7"/>
<dbReference type="FunCoup" id="A5E2M7">
    <property type="interactions" value="78"/>
</dbReference>
<dbReference type="STRING" id="379508.A5E2M7"/>
<dbReference type="GeneID" id="5232110"/>
<dbReference type="KEGG" id="lel:PVL30_004688"/>
<dbReference type="VEuPathDB" id="FungiDB:LELG_03864"/>
<dbReference type="eggNOG" id="KOG4431">
    <property type="taxonomic scope" value="Eukaryota"/>
</dbReference>
<dbReference type="HOGENOM" id="CLU_087356_1_0_1"/>
<dbReference type="InParanoid" id="A5E2M7"/>
<dbReference type="OMA" id="QRWIREL"/>
<dbReference type="OrthoDB" id="6604018at2759"/>
<dbReference type="Proteomes" id="UP000001996">
    <property type="component" value="Unassembled WGS sequence"/>
</dbReference>
<dbReference type="GO" id="GO:0005743">
    <property type="term" value="C:mitochondrial inner membrane"/>
    <property type="evidence" value="ECO:0007669"/>
    <property type="project" value="EnsemblFungi"/>
</dbReference>
<dbReference type="GO" id="GO:0098803">
    <property type="term" value="C:respiratory chain complex"/>
    <property type="evidence" value="ECO:0007669"/>
    <property type="project" value="EnsemblFungi"/>
</dbReference>
<dbReference type="GO" id="GO:0033617">
    <property type="term" value="P:mitochondrial cytochrome c oxidase assembly"/>
    <property type="evidence" value="ECO:0007669"/>
    <property type="project" value="EnsemblFungi"/>
</dbReference>
<dbReference type="GO" id="GO:0097250">
    <property type="term" value="P:mitochondrial respirasome assembly"/>
    <property type="evidence" value="ECO:0007669"/>
    <property type="project" value="EnsemblFungi"/>
</dbReference>
<dbReference type="GO" id="GO:0010155">
    <property type="term" value="P:regulation of proton transport"/>
    <property type="evidence" value="ECO:0007669"/>
    <property type="project" value="EnsemblFungi"/>
</dbReference>
<dbReference type="Gene3D" id="6.10.140.1320">
    <property type="match status" value="1"/>
</dbReference>
<dbReference type="InterPro" id="IPR007667">
    <property type="entry name" value="Hypoxia_induced_domain"/>
</dbReference>
<dbReference type="InterPro" id="IPR050355">
    <property type="entry name" value="RCF1"/>
</dbReference>
<dbReference type="PANTHER" id="PTHR12297:SF3">
    <property type="entry name" value="HIG1 DOMAIN FAMILY MEMBER 1A"/>
    <property type="match status" value="1"/>
</dbReference>
<dbReference type="PANTHER" id="PTHR12297">
    <property type="entry name" value="HYPOXIA-INDUCBILE GENE 1 HIG1 -RELATED"/>
    <property type="match status" value="1"/>
</dbReference>
<dbReference type="Pfam" id="PF04588">
    <property type="entry name" value="HIG_1_N"/>
    <property type="match status" value="1"/>
</dbReference>
<dbReference type="PROSITE" id="PS51503">
    <property type="entry name" value="HIG1"/>
    <property type="match status" value="1"/>
</dbReference>
<gene>
    <name type="primary">RCF1</name>
    <name type="synonym">AIM31</name>
    <name type="ORF">LELG_03864</name>
</gene>